<comment type="function">
    <text evidence="1">Catalyzes the sequential NAD-dependent oxidations of L-histidinol to L-histidinaldehyde and then to L-histidine.</text>
</comment>
<comment type="catalytic activity">
    <reaction evidence="1">
        <text>L-histidinol + 2 NAD(+) + H2O = L-histidine + 2 NADH + 3 H(+)</text>
        <dbReference type="Rhea" id="RHEA:20641"/>
        <dbReference type="ChEBI" id="CHEBI:15377"/>
        <dbReference type="ChEBI" id="CHEBI:15378"/>
        <dbReference type="ChEBI" id="CHEBI:57540"/>
        <dbReference type="ChEBI" id="CHEBI:57595"/>
        <dbReference type="ChEBI" id="CHEBI:57699"/>
        <dbReference type="ChEBI" id="CHEBI:57945"/>
        <dbReference type="EC" id="1.1.1.23"/>
    </reaction>
</comment>
<comment type="cofactor">
    <cofactor evidence="1">
        <name>Zn(2+)</name>
        <dbReference type="ChEBI" id="CHEBI:29105"/>
    </cofactor>
    <text evidence="1">Binds 1 zinc ion per subunit.</text>
</comment>
<comment type="pathway">
    <text evidence="1">Amino-acid biosynthesis; L-histidine biosynthesis; L-histidine from 5-phospho-alpha-D-ribose 1-diphosphate: step 9/9.</text>
</comment>
<comment type="similarity">
    <text evidence="1">Belongs to the histidinol dehydrogenase family.</text>
</comment>
<organism>
    <name type="scientific">Bacteroides thetaiotaomicron (strain ATCC 29148 / DSM 2079 / JCM 5827 / CCUG 10774 / NCTC 10582 / VPI-5482 / E50)</name>
    <dbReference type="NCBI Taxonomy" id="226186"/>
    <lineage>
        <taxon>Bacteria</taxon>
        <taxon>Pseudomonadati</taxon>
        <taxon>Bacteroidota</taxon>
        <taxon>Bacteroidia</taxon>
        <taxon>Bacteroidales</taxon>
        <taxon>Bacteroidaceae</taxon>
        <taxon>Bacteroides</taxon>
    </lineage>
</organism>
<reference key="1">
    <citation type="journal article" date="2003" name="Science">
        <title>A genomic view of the human-Bacteroides thetaiotaomicron symbiosis.</title>
        <authorList>
            <person name="Xu J."/>
            <person name="Bjursell M.K."/>
            <person name="Himrod J."/>
            <person name="Deng S."/>
            <person name="Carmichael L.K."/>
            <person name="Chiang H.C."/>
            <person name="Hooper L.V."/>
            <person name="Gordon J.I."/>
        </authorList>
    </citation>
    <scope>NUCLEOTIDE SEQUENCE [LARGE SCALE GENOMIC DNA]</scope>
    <source>
        <strain>ATCC 29148 / DSM 2079 / JCM 5827 / CCUG 10774 / NCTC 10582 / VPI-5482 / E50</strain>
    </source>
</reference>
<dbReference type="EC" id="1.1.1.23" evidence="1"/>
<dbReference type="EMBL" id="AE015928">
    <property type="protein sequence ID" value="AAO75308.1"/>
    <property type="molecule type" value="Genomic_DNA"/>
</dbReference>
<dbReference type="RefSeq" id="NP_809114.1">
    <property type="nucleotide sequence ID" value="NC_004663.1"/>
</dbReference>
<dbReference type="SMR" id="Q8ABA9"/>
<dbReference type="FunCoup" id="Q8ABA9">
    <property type="interactions" value="538"/>
</dbReference>
<dbReference type="STRING" id="226186.BT_0201"/>
<dbReference type="PaxDb" id="226186-BT_0201"/>
<dbReference type="EnsemblBacteria" id="AAO75308">
    <property type="protein sequence ID" value="AAO75308"/>
    <property type="gene ID" value="BT_0201"/>
</dbReference>
<dbReference type="KEGG" id="bth:BT_0201"/>
<dbReference type="PATRIC" id="fig|226186.12.peg.199"/>
<dbReference type="eggNOG" id="COG0141">
    <property type="taxonomic scope" value="Bacteria"/>
</dbReference>
<dbReference type="HOGENOM" id="CLU_006732_3_0_10"/>
<dbReference type="InParanoid" id="Q8ABA9"/>
<dbReference type="OrthoDB" id="9805269at2"/>
<dbReference type="UniPathway" id="UPA00031">
    <property type="reaction ID" value="UER00014"/>
</dbReference>
<dbReference type="Proteomes" id="UP000001414">
    <property type="component" value="Chromosome"/>
</dbReference>
<dbReference type="GO" id="GO:0005737">
    <property type="term" value="C:cytoplasm"/>
    <property type="evidence" value="ECO:0000318"/>
    <property type="project" value="GO_Central"/>
</dbReference>
<dbReference type="GO" id="GO:0005829">
    <property type="term" value="C:cytosol"/>
    <property type="evidence" value="ECO:0000318"/>
    <property type="project" value="GO_Central"/>
</dbReference>
<dbReference type="GO" id="GO:0004399">
    <property type="term" value="F:histidinol dehydrogenase activity"/>
    <property type="evidence" value="ECO:0000318"/>
    <property type="project" value="GO_Central"/>
</dbReference>
<dbReference type="GO" id="GO:0051287">
    <property type="term" value="F:NAD binding"/>
    <property type="evidence" value="ECO:0007669"/>
    <property type="project" value="InterPro"/>
</dbReference>
<dbReference type="GO" id="GO:0008270">
    <property type="term" value="F:zinc ion binding"/>
    <property type="evidence" value="ECO:0007669"/>
    <property type="project" value="UniProtKB-UniRule"/>
</dbReference>
<dbReference type="GO" id="GO:0000105">
    <property type="term" value="P:L-histidine biosynthetic process"/>
    <property type="evidence" value="ECO:0000318"/>
    <property type="project" value="GO_Central"/>
</dbReference>
<dbReference type="CDD" id="cd06572">
    <property type="entry name" value="Histidinol_dh"/>
    <property type="match status" value="1"/>
</dbReference>
<dbReference type="FunFam" id="3.40.50.1980:FF:000001">
    <property type="entry name" value="Histidinol dehydrogenase"/>
    <property type="match status" value="1"/>
</dbReference>
<dbReference type="FunFam" id="3.40.50.1980:FF:000002">
    <property type="entry name" value="Histidinol dehydrogenase, chloroplastic"/>
    <property type="match status" value="1"/>
</dbReference>
<dbReference type="Gene3D" id="1.20.5.1300">
    <property type="match status" value="1"/>
</dbReference>
<dbReference type="Gene3D" id="3.40.50.1980">
    <property type="entry name" value="Nitrogenase molybdenum iron protein domain"/>
    <property type="match status" value="2"/>
</dbReference>
<dbReference type="HAMAP" id="MF_01024">
    <property type="entry name" value="HisD"/>
    <property type="match status" value="1"/>
</dbReference>
<dbReference type="InterPro" id="IPR016161">
    <property type="entry name" value="Ald_DH/histidinol_DH"/>
</dbReference>
<dbReference type="InterPro" id="IPR001692">
    <property type="entry name" value="Histidinol_DH_CS"/>
</dbReference>
<dbReference type="InterPro" id="IPR022695">
    <property type="entry name" value="Histidinol_DH_monofunct"/>
</dbReference>
<dbReference type="InterPro" id="IPR012131">
    <property type="entry name" value="Hstdl_DH"/>
</dbReference>
<dbReference type="NCBIfam" id="TIGR00069">
    <property type="entry name" value="hisD"/>
    <property type="match status" value="1"/>
</dbReference>
<dbReference type="PANTHER" id="PTHR21256:SF2">
    <property type="entry name" value="HISTIDINE BIOSYNTHESIS TRIFUNCTIONAL PROTEIN"/>
    <property type="match status" value="1"/>
</dbReference>
<dbReference type="PANTHER" id="PTHR21256">
    <property type="entry name" value="HISTIDINOL DEHYDROGENASE HDH"/>
    <property type="match status" value="1"/>
</dbReference>
<dbReference type="Pfam" id="PF00815">
    <property type="entry name" value="Histidinol_dh"/>
    <property type="match status" value="1"/>
</dbReference>
<dbReference type="PIRSF" id="PIRSF000099">
    <property type="entry name" value="Histidinol_dh"/>
    <property type="match status" value="1"/>
</dbReference>
<dbReference type="PRINTS" id="PR00083">
    <property type="entry name" value="HOLDHDRGNASE"/>
</dbReference>
<dbReference type="SUPFAM" id="SSF53720">
    <property type="entry name" value="ALDH-like"/>
    <property type="match status" value="1"/>
</dbReference>
<dbReference type="PROSITE" id="PS00611">
    <property type="entry name" value="HISOL_DEHYDROGENASE"/>
    <property type="match status" value="1"/>
</dbReference>
<accession>Q8ABA9</accession>
<proteinExistence type="inferred from homology"/>
<gene>
    <name evidence="1" type="primary">hisD</name>
    <name type="ordered locus">BT_0201</name>
</gene>
<protein>
    <recommendedName>
        <fullName evidence="1">Histidinol dehydrogenase</fullName>
        <shortName evidence="1">HDH</shortName>
        <ecNumber evidence="1">1.1.1.23</ecNumber>
    </recommendedName>
</protein>
<keyword id="KW-0028">Amino-acid biosynthesis</keyword>
<keyword id="KW-0368">Histidine biosynthesis</keyword>
<keyword id="KW-0479">Metal-binding</keyword>
<keyword id="KW-0520">NAD</keyword>
<keyword id="KW-0560">Oxidoreductase</keyword>
<keyword id="KW-1185">Reference proteome</keyword>
<keyword id="KW-0862">Zinc</keyword>
<feature type="chain" id="PRO_0000135732" description="Histidinol dehydrogenase">
    <location>
        <begin position="1"/>
        <end position="428"/>
    </location>
</feature>
<feature type="active site" description="Proton acceptor" evidence="1">
    <location>
        <position position="323"/>
    </location>
</feature>
<feature type="active site" description="Proton acceptor" evidence="1">
    <location>
        <position position="324"/>
    </location>
</feature>
<feature type="binding site" evidence="1">
    <location>
        <position position="125"/>
    </location>
    <ligand>
        <name>NAD(+)</name>
        <dbReference type="ChEBI" id="CHEBI:57540"/>
    </ligand>
</feature>
<feature type="binding site" evidence="1">
    <location>
        <position position="187"/>
    </location>
    <ligand>
        <name>NAD(+)</name>
        <dbReference type="ChEBI" id="CHEBI:57540"/>
    </ligand>
</feature>
<feature type="binding site" evidence="1">
    <location>
        <position position="210"/>
    </location>
    <ligand>
        <name>NAD(+)</name>
        <dbReference type="ChEBI" id="CHEBI:57540"/>
    </ligand>
</feature>
<feature type="binding site" evidence="1">
    <location>
        <position position="234"/>
    </location>
    <ligand>
        <name>substrate</name>
    </ligand>
</feature>
<feature type="binding site" evidence="1">
    <location>
        <position position="256"/>
    </location>
    <ligand>
        <name>substrate</name>
    </ligand>
</feature>
<feature type="binding site" evidence="1">
    <location>
        <position position="256"/>
    </location>
    <ligand>
        <name>Zn(2+)</name>
        <dbReference type="ChEBI" id="CHEBI:29105"/>
    </ligand>
</feature>
<feature type="binding site" evidence="1">
    <location>
        <position position="259"/>
    </location>
    <ligand>
        <name>substrate</name>
    </ligand>
</feature>
<feature type="binding site" evidence="1">
    <location>
        <position position="259"/>
    </location>
    <ligand>
        <name>Zn(2+)</name>
        <dbReference type="ChEBI" id="CHEBI:29105"/>
    </ligand>
</feature>
<feature type="binding site" evidence="1">
    <location>
        <position position="324"/>
    </location>
    <ligand>
        <name>substrate</name>
    </ligand>
</feature>
<feature type="binding site" evidence="1">
    <location>
        <position position="357"/>
    </location>
    <ligand>
        <name>substrate</name>
    </ligand>
</feature>
<feature type="binding site" evidence="1">
    <location>
        <position position="357"/>
    </location>
    <ligand>
        <name>Zn(2+)</name>
        <dbReference type="ChEBI" id="CHEBI:29105"/>
    </ligand>
</feature>
<feature type="binding site" evidence="1">
    <location>
        <position position="411"/>
    </location>
    <ligand>
        <name>substrate</name>
    </ligand>
</feature>
<feature type="binding site" evidence="1">
    <location>
        <position position="416"/>
    </location>
    <ligand>
        <name>substrate</name>
    </ligand>
</feature>
<feature type="binding site" evidence="1">
    <location>
        <position position="416"/>
    </location>
    <ligand>
        <name>Zn(2+)</name>
        <dbReference type="ChEBI" id="CHEBI:29105"/>
    </ligand>
</feature>
<evidence type="ECO:0000255" key="1">
    <source>
        <dbReference type="HAMAP-Rule" id="MF_01024"/>
    </source>
</evidence>
<name>HISX_BACTN</name>
<sequence length="428" mass="46246">MMKLIKYPSKEQWAELLKRPALNTESLFDTVRTIINKVRAEGDKAVLEYEAAFDKVTLSALTVTSEEIQKAEGLISDELKSAITLAKRNIETFHSSQRFVGKKVETMEGVTCWQKAVGIEKVGLYIPGGTAPLFSTVLMLAVPAKIAGCREIVLCTPPDKNGNIHPAILFAAQLAGVSKIFKAGGVQAIAAMAYGTESVPKVYKIFGPGNQYVTAAKQLVSLRDVAIDMPAGPSEVEVLADASANPVFVAADLLSQAEHGVDSQAMLITTSEKLQAEVMEEVNRQLAKLPRREIAAKSLENSKLILVKDMDEALELTNAYAPEHLIVETENYLEVAERVINAGSVFLGSLTPESAGDYASGTNHTLPTNGYAKAYSGVSLDSFIRKITFQEILPQGMKVIGPAIEEMAANELLDAHKNAVTVRLNTLK</sequence>